<comment type="function">
    <text evidence="1">Catalyzes a trans-dehydration via an enolate intermediate.</text>
</comment>
<comment type="catalytic activity">
    <reaction evidence="1">
        <text>3-dehydroquinate = 3-dehydroshikimate + H2O</text>
        <dbReference type="Rhea" id="RHEA:21096"/>
        <dbReference type="ChEBI" id="CHEBI:15377"/>
        <dbReference type="ChEBI" id="CHEBI:16630"/>
        <dbReference type="ChEBI" id="CHEBI:32364"/>
        <dbReference type="EC" id="4.2.1.10"/>
    </reaction>
</comment>
<comment type="pathway">
    <text evidence="1">Metabolic intermediate biosynthesis; chorismate biosynthesis; chorismate from D-erythrose 4-phosphate and phosphoenolpyruvate: step 3/7.</text>
</comment>
<comment type="subunit">
    <text evidence="1">Homododecamer.</text>
</comment>
<comment type="similarity">
    <text evidence="1">Belongs to the type-II 3-dehydroquinase family.</text>
</comment>
<gene>
    <name evidence="1" type="primary">aroQ</name>
    <name type="ordered locus">Ent638_3692</name>
</gene>
<sequence length="150" mass="16568">MADKFHILVLNGPNLNMLGTREPEKYGSLTLSEIVNRLSTEATSLNVELDHFQSNAEYAIIDRIHQAKDTVDYILINPAAFTHTSVAIRDALLAVSIPFIEIHLSNVHAREPFRHHSYLSDIAAGVICGLGADGYSYALQTAVKRLSQSH</sequence>
<feature type="chain" id="PRO_1000058294" description="3-dehydroquinate dehydratase">
    <location>
        <begin position="1"/>
        <end position="150"/>
    </location>
</feature>
<feature type="active site" description="Proton acceptor" evidence="1">
    <location>
        <position position="26"/>
    </location>
</feature>
<feature type="active site" description="Proton donor" evidence="1">
    <location>
        <position position="103"/>
    </location>
</feature>
<feature type="binding site" evidence="1">
    <location>
        <position position="77"/>
    </location>
    <ligand>
        <name>substrate</name>
    </ligand>
</feature>
<feature type="binding site" evidence="1">
    <location>
        <position position="83"/>
    </location>
    <ligand>
        <name>substrate</name>
    </ligand>
</feature>
<feature type="binding site" evidence="1">
    <location>
        <position position="90"/>
    </location>
    <ligand>
        <name>substrate</name>
    </ligand>
</feature>
<feature type="binding site" evidence="1">
    <location>
        <begin position="104"/>
        <end position="105"/>
    </location>
    <ligand>
        <name>substrate</name>
    </ligand>
</feature>
<feature type="binding site" evidence="1">
    <location>
        <position position="114"/>
    </location>
    <ligand>
        <name>substrate</name>
    </ligand>
</feature>
<feature type="site" description="Transition state stabilizer" evidence="1">
    <location>
        <position position="21"/>
    </location>
</feature>
<reference key="1">
    <citation type="journal article" date="2010" name="PLoS Genet.">
        <title>Genome sequence of the plant growth promoting endophytic bacterium Enterobacter sp. 638.</title>
        <authorList>
            <person name="Taghavi S."/>
            <person name="van der Lelie D."/>
            <person name="Hoffman A."/>
            <person name="Zhang Y.B."/>
            <person name="Walla M.D."/>
            <person name="Vangronsveld J."/>
            <person name="Newman L."/>
            <person name="Monchy S."/>
        </authorList>
    </citation>
    <scope>NUCLEOTIDE SEQUENCE [LARGE SCALE GENOMIC DNA]</scope>
    <source>
        <strain>638</strain>
    </source>
</reference>
<keyword id="KW-0028">Amino-acid biosynthesis</keyword>
<keyword id="KW-0057">Aromatic amino acid biosynthesis</keyword>
<keyword id="KW-0456">Lyase</keyword>
<evidence type="ECO:0000255" key="1">
    <source>
        <dbReference type="HAMAP-Rule" id="MF_00169"/>
    </source>
</evidence>
<organism>
    <name type="scientific">Enterobacter sp. (strain 638)</name>
    <dbReference type="NCBI Taxonomy" id="399742"/>
    <lineage>
        <taxon>Bacteria</taxon>
        <taxon>Pseudomonadati</taxon>
        <taxon>Pseudomonadota</taxon>
        <taxon>Gammaproteobacteria</taxon>
        <taxon>Enterobacterales</taxon>
        <taxon>Enterobacteriaceae</taxon>
        <taxon>Enterobacter</taxon>
    </lineage>
</organism>
<name>AROQ_ENT38</name>
<protein>
    <recommendedName>
        <fullName evidence="1">3-dehydroquinate dehydratase</fullName>
        <shortName evidence="1">3-dehydroquinase</shortName>
        <ecNumber evidence="1">4.2.1.10</ecNumber>
    </recommendedName>
    <alternativeName>
        <fullName evidence="1">Type II DHQase</fullName>
    </alternativeName>
</protein>
<proteinExistence type="inferred from homology"/>
<dbReference type="EC" id="4.2.1.10" evidence="1"/>
<dbReference type="EMBL" id="CP000653">
    <property type="protein sequence ID" value="ABP62349.1"/>
    <property type="molecule type" value="Genomic_DNA"/>
</dbReference>
<dbReference type="RefSeq" id="WP_015960671.1">
    <property type="nucleotide sequence ID" value="NC_009436.1"/>
</dbReference>
<dbReference type="SMR" id="A4WF69"/>
<dbReference type="STRING" id="399742.Ent638_3692"/>
<dbReference type="KEGG" id="ent:Ent638_3692"/>
<dbReference type="eggNOG" id="COG0757">
    <property type="taxonomic scope" value="Bacteria"/>
</dbReference>
<dbReference type="HOGENOM" id="CLU_090968_1_0_6"/>
<dbReference type="OrthoDB" id="9790793at2"/>
<dbReference type="UniPathway" id="UPA00053">
    <property type="reaction ID" value="UER00086"/>
</dbReference>
<dbReference type="Proteomes" id="UP000000230">
    <property type="component" value="Chromosome"/>
</dbReference>
<dbReference type="GO" id="GO:0003855">
    <property type="term" value="F:3-dehydroquinate dehydratase activity"/>
    <property type="evidence" value="ECO:0007669"/>
    <property type="project" value="UniProtKB-UniRule"/>
</dbReference>
<dbReference type="GO" id="GO:0008652">
    <property type="term" value="P:amino acid biosynthetic process"/>
    <property type="evidence" value="ECO:0007669"/>
    <property type="project" value="UniProtKB-KW"/>
</dbReference>
<dbReference type="GO" id="GO:0009073">
    <property type="term" value="P:aromatic amino acid family biosynthetic process"/>
    <property type="evidence" value="ECO:0007669"/>
    <property type="project" value="UniProtKB-KW"/>
</dbReference>
<dbReference type="GO" id="GO:0009423">
    <property type="term" value="P:chorismate biosynthetic process"/>
    <property type="evidence" value="ECO:0007669"/>
    <property type="project" value="UniProtKB-UniRule"/>
</dbReference>
<dbReference type="GO" id="GO:0019631">
    <property type="term" value="P:quinate catabolic process"/>
    <property type="evidence" value="ECO:0007669"/>
    <property type="project" value="TreeGrafter"/>
</dbReference>
<dbReference type="CDD" id="cd00466">
    <property type="entry name" value="DHQase_II"/>
    <property type="match status" value="1"/>
</dbReference>
<dbReference type="Gene3D" id="3.40.50.9100">
    <property type="entry name" value="Dehydroquinase, class II"/>
    <property type="match status" value="1"/>
</dbReference>
<dbReference type="HAMAP" id="MF_00169">
    <property type="entry name" value="AroQ"/>
    <property type="match status" value="1"/>
</dbReference>
<dbReference type="InterPro" id="IPR001874">
    <property type="entry name" value="DHquinase_II"/>
</dbReference>
<dbReference type="InterPro" id="IPR018509">
    <property type="entry name" value="DHquinase_II_CS"/>
</dbReference>
<dbReference type="InterPro" id="IPR036441">
    <property type="entry name" value="DHquinase_II_sf"/>
</dbReference>
<dbReference type="NCBIfam" id="TIGR01088">
    <property type="entry name" value="aroQ"/>
    <property type="match status" value="1"/>
</dbReference>
<dbReference type="NCBIfam" id="NF003804">
    <property type="entry name" value="PRK05395.1-1"/>
    <property type="match status" value="1"/>
</dbReference>
<dbReference type="NCBIfam" id="NF003805">
    <property type="entry name" value="PRK05395.1-2"/>
    <property type="match status" value="1"/>
</dbReference>
<dbReference type="NCBIfam" id="NF003806">
    <property type="entry name" value="PRK05395.1-3"/>
    <property type="match status" value="1"/>
</dbReference>
<dbReference type="NCBIfam" id="NF003807">
    <property type="entry name" value="PRK05395.1-4"/>
    <property type="match status" value="1"/>
</dbReference>
<dbReference type="PANTHER" id="PTHR21272">
    <property type="entry name" value="CATABOLIC 3-DEHYDROQUINASE"/>
    <property type="match status" value="1"/>
</dbReference>
<dbReference type="PANTHER" id="PTHR21272:SF3">
    <property type="entry name" value="CATABOLIC 3-DEHYDROQUINASE"/>
    <property type="match status" value="1"/>
</dbReference>
<dbReference type="Pfam" id="PF01220">
    <property type="entry name" value="DHquinase_II"/>
    <property type="match status" value="1"/>
</dbReference>
<dbReference type="PIRSF" id="PIRSF001399">
    <property type="entry name" value="DHquinase_II"/>
    <property type="match status" value="1"/>
</dbReference>
<dbReference type="SUPFAM" id="SSF52304">
    <property type="entry name" value="Type II 3-dehydroquinate dehydratase"/>
    <property type="match status" value="1"/>
</dbReference>
<dbReference type="PROSITE" id="PS01029">
    <property type="entry name" value="DEHYDROQUINASE_II"/>
    <property type="match status" value="1"/>
</dbReference>
<accession>A4WF69</accession>